<sequence length="439" mass="47578">MTISKVHSRYVYDSRGNPTVEVDVTTENGLFRAIVPSGASTGINEAMELRDGDKSKWQGKGVTKAVDNVNKTIAPHLIKSGLDEKNQEEIDSFLLKLDGTPNKRSLGANAILGVSLAVAKAGAAAKQVPLYRHIADISKSKQDKYVLPVPFQNVLNGGSHAGGSLAFQEFMIAPTNAPSFSEALRIGSEVYHHLKSLTKSKYGQSAGNVGDEGGVAPDIETPEEALDLIVASIEKAGYKGKVSIALDVASSEFYKDGKYDLDFKNPNSDKSKWLSGDQLADLYESLIDNYPIISIEDPFSEEDWDAWSNFYPKVASKLQIVGDDLTVTNPIFIKKAIEKKAANALLLKVNQIGTLTESIKAAQLAFSDKWGVMVSHRSGETEDHIIADIVVGLRTGQIKTGAPSRSERLAKLNQILRIEQELGDDAVYSGKGFHTAQNL</sequence>
<protein>
    <recommendedName>
        <fullName>Enolase 1</fullName>
        <ecNumber>4.2.1.11</ecNumber>
    </recommendedName>
    <alternativeName>
        <fullName>2-phospho-D-glycerate hydro-lyase 1</fullName>
    </alternativeName>
    <alternativeName>
        <fullName>2-phosphoglycerate dehydratase 1</fullName>
    </alternativeName>
</protein>
<organism>
    <name type="scientific">Debaryomyces hansenii (strain ATCC 36239 / CBS 767 / BCRC 21394 / JCM 1990 / NBRC 0083 / IGC 2968)</name>
    <name type="common">Yeast</name>
    <name type="synonym">Torulaspora hansenii</name>
    <dbReference type="NCBI Taxonomy" id="284592"/>
    <lineage>
        <taxon>Eukaryota</taxon>
        <taxon>Fungi</taxon>
        <taxon>Dikarya</taxon>
        <taxon>Ascomycota</taxon>
        <taxon>Saccharomycotina</taxon>
        <taxon>Pichiomycetes</taxon>
        <taxon>Debaryomycetaceae</taxon>
        <taxon>Debaryomyces</taxon>
    </lineage>
</organism>
<reference key="1">
    <citation type="journal article" date="2004" name="Nature">
        <title>Genome evolution in yeasts.</title>
        <authorList>
            <person name="Dujon B."/>
            <person name="Sherman D."/>
            <person name="Fischer G."/>
            <person name="Durrens P."/>
            <person name="Casaregola S."/>
            <person name="Lafontaine I."/>
            <person name="de Montigny J."/>
            <person name="Marck C."/>
            <person name="Neuveglise C."/>
            <person name="Talla E."/>
            <person name="Goffard N."/>
            <person name="Frangeul L."/>
            <person name="Aigle M."/>
            <person name="Anthouard V."/>
            <person name="Babour A."/>
            <person name="Barbe V."/>
            <person name="Barnay S."/>
            <person name="Blanchin S."/>
            <person name="Beckerich J.-M."/>
            <person name="Beyne E."/>
            <person name="Bleykasten C."/>
            <person name="Boisrame A."/>
            <person name="Boyer J."/>
            <person name="Cattolico L."/>
            <person name="Confanioleri F."/>
            <person name="de Daruvar A."/>
            <person name="Despons L."/>
            <person name="Fabre E."/>
            <person name="Fairhead C."/>
            <person name="Ferry-Dumazet H."/>
            <person name="Groppi A."/>
            <person name="Hantraye F."/>
            <person name="Hennequin C."/>
            <person name="Jauniaux N."/>
            <person name="Joyet P."/>
            <person name="Kachouri R."/>
            <person name="Kerrest A."/>
            <person name="Koszul R."/>
            <person name="Lemaire M."/>
            <person name="Lesur I."/>
            <person name="Ma L."/>
            <person name="Muller H."/>
            <person name="Nicaud J.-M."/>
            <person name="Nikolski M."/>
            <person name="Oztas S."/>
            <person name="Ozier-Kalogeropoulos O."/>
            <person name="Pellenz S."/>
            <person name="Potier S."/>
            <person name="Richard G.-F."/>
            <person name="Straub M.-L."/>
            <person name="Suleau A."/>
            <person name="Swennen D."/>
            <person name="Tekaia F."/>
            <person name="Wesolowski-Louvel M."/>
            <person name="Westhof E."/>
            <person name="Wirth B."/>
            <person name="Zeniou-Meyer M."/>
            <person name="Zivanovic Y."/>
            <person name="Bolotin-Fukuhara M."/>
            <person name="Thierry A."/>
            <person name="Bouchier C."/>
            <person name="Caudron B."/>
            <person name="Scarpelli C."/>
            <person name="Gaillardin C."/>
            <person name="Weissenbach J."/>
            <person name="Wincker P."/>
            <person name="Souciet J.-L."/>
        </authorList>
    </citation>
    <scope>NUCLEOTIDE SEQUENCE [LARGE SCALE GENOMIC DNA]</scope>
    <source>
        <strain>ATCC 36239 / CBS 767 / BCRC 21394 / JCM 1990 / NBRC 0083 / IGC 2968</strain>
    </source>
</reference>
<gene>
    <name type="primary">ENO1</name>
    <name type="ordered locus">DEHA2D02112g</name>
</gene>
<proteinExistence type="inferred from homology"/>
<name>ENO1_DEBHA</name>
<accession>Q6BTB1</accession>
<evidence type="ECO:0000250" key="1"/>
<evidence type="ECO:0000305" key="2"/>
<dbReference type="EC" id="4.2.1.11"/>
<dbReference type="EMBL" id="CR382136">
    <property type="protein sequence ID" value="CAG86691.1"/>
    <property type="molecule type" value="Genomic_DNA"/>
</dbReference>
<dbReference type="RefSeq" id="XP_458559.1">
    <property type="nucleotide sequence ID" value="XM_458559.1"/>
</dbReference>
<dbReference type="SMR" id="Q6BTB1"/>
<dbReference type="FunCoup" id="Q6BTB1">
    <property type="interactions" value="1272"/>
</dbReference>
<dbReference type="STRING" id="284592.Q6BTB1"/>
<dbReference type="GeneID" id="2901509"/>
<dbReference type="KEGG" id="dha:DEHA2D02112g"/>
<dbReference type="eggNOG" id="KOG2670">
    <property type="taxonomic scope" value="Eukaryota"/>
</dbReference>
<dbReference type="HOGENOM" id="CLU_031223_0_0_1"/>
<dbReference type="InParanoid" id="Q6BTB1"/>
<dbReference type="OMA" id="GMSITKI"/>
<dbReference type="OrthoDB" id="1739814at2759"/>
<dbReference type="UniPathway" id="UPA00109">
    <property type="reaction ID" value="UER00187"/>
</dbReference>
<dbReference type="Proteomes" id="UP000000599">
    <property type="component" value="Chromosome D"/>
</dbReference>
<dbReference type="GO" id="GO:0000015">
    <property type="term" value="C:phosphopyruvate hydratase complex"/>
    <property type="evidence" value="ECO:0007669"/>
    <property type="project" value="InterPro"/>
</dbReference>
<dbReference type="GO" id="GO:0000287">
    <property type="term" value="F:magnesium ion binding"/>
    <property type="evidence" value="ECO:0007669"/>
    <property type="project" value="InterPro"/>
</dbReference>
<dbReference type="GO" id="GO:0004634">
    <property type="term" value="F:phosphopyruvate hydratase activity"/>
    <property type="evidence" value="ECO:0007669"/>
    <property type="project" value="UniProtKB-EC"/>
</dbReference>
<dbReference type="GO" id="GO:0006096">
    <property type="term" value="P:glycolytic process"/>
    <property type="evidence" value="ECO:0007669"/>
    <property type="project" value="UniProtKB-UniPathway"/>
</dbReference>
<dbReference type="CDD" id="cd03313">
    <property type="entry name" value="enolase"/>
    <property type="match status" value="1"/>
</dbReference>
<dbReference type="FunFam" id="3.30.390.10:FF:000001">
    <property type="entry name" value="Enolase"/>
    <property type="match status" value="1"/>
</dbReference>
<dbReference type="FunFam" id="3.20.20.120:FF:000002">
    <property type="entry name" value="Enolase 1"/>
    <property type="match status" value="1"/>
</dbReference>
<dbReference type="Gene3D" id="3.20.20.120">
    <property type="entry name" value="Enolase-like C-terminal domain"/>
    <property type="match status" value="1"/>
</dbReference>
<dbReference type="Gene3D" id="3.30.390.10">
    <property type="entry name" value="Enolase-like, N-terminal domain"/>
    <property type="match status" value="1"/>
</dbReference>
<dbReference type="HAMAP" id="MF_00318">
    <property type="entry name" value="Enolase"/>
    <property type="match status" value="1"/>
</dbReference>
<dbReference type="InterPro" id="IPR000941">
    <property type="entry name" value="Enolase"/>
</dbReference>
<dbReference type="InterPro" id="IPR036849">
    <property type="entry name" value="Enolase-like_C_sf"/>
</dbReference>
<dbReference type="InterPro" id="IPR029017">
    <property type="entry name" value="Enolase-like_N"/>
</dbReference>
<dbReference type="InterPro" id="IPR020810">
    <property type="entry name" value="Enolase_C"/>
</dbReference>
<dbReference type="InterPro" id="IPR020809">
    <property type="entry name" value="Enolase_CS"/>
</dbReference>
<dbReference type="InterPro" id="IPR020811">
    <property type="entry name" value="Enolase_N"/>
</dbReference>
<dbReference type="NCBIfam" id="TIGR01060">
    <property type="entry name" value="eno"/>
    <property type="match status" value="1"/>
</dbReference>
<dbReference type="PANTHER" id="PTHR11902">
    <property type="entry name" value="ENOLASE"/>
    <property type="match status" value="1"/>
</dbReference>
<dbReference type="PANTHER" id="PTHR11902:SF1">
    <property type="entry name" value="ENOLASE"/>
    <property type="match status" value="1"/>
</dbReference>
<dbReference type="Pfam" id="PF00113">
    <property type="entry name" value="Enolase_C"/>
    <property type="match status" value="1"/>
</dbReference>
<dbReference type="Pfam" id="PF03952">
    <property type="entry name" value="Enolase_N"/>
    <property type="match status" value="1"/>
</dbReference>
<dbReference type="PIRSF" id="PIRSF001400">
    <property type="entry name" value="Enolase"/>
    <property type="match status" value="1"/>
</dbReference>
<dbReference type="PRINTS" id="PR00148">
    <property type="entry name" value="ENOLASE"/>
</dbReference>
<dbReference type="SFLD" id="SFLDS00001">
    <property type="entry name" value="Enolase"/>
    <property type="match status" value="1"/>
</dbReference>
<dbReference type="SFLD" id="SFLDF00002">
    <property type="entry name" value="enolase"/>
    <property type="match status" value="1"/>
</dbReference>
<dbReference type="SMART" id="SM01192">
    <property type="entry name" value="Enolase_C"/>
    <property type="match status" value="1"/>
</dbReference>
<dbReference type="SMART" id="SM01193">
    <property type="entry name" value="Enolase_N"/>
    <property type="match status" value="1"/>
</dbReference>
<dbReference type="SUPFAM" id="SSF51604">
    <property type="entry name" value="Enolase C-terminal domain-like"/>
    <property type="match status" value="1"/>
</dbReference>
<dbReference type="SUPFAM" id="SSF54826">
    <property type="entry name" value="Enolase N-terminal domain-like"/>
    <property type="match status" value="1"/>
</dbReference>
<dbReference type="PROSITE" id="PS00164">
    <property type="entry name" value="ENOLASE"/>
    <property type="match status" value="1"/>
</dbReference>
<comment type="catalytic activity">
    <reaction>
        <text>(2R)-2-phosphoglycerate = phosphoenolpyruvate + H2O</text>
        <dbReference type="Rhea" id="RHEA:10164"/>
        <dbReference type="ChEBI" id="CHEBI:15377"/>
        <dbReference type="ChEBI" id="CHEBI:58289"/>
        <dbReference type="ChEBI" id="CHEBI:58702"/>
        <dbReference type="EC" id="4.2.1.11"/>
    </reaction>
</comment>
<comment type="cofactor">
    <cofactor evidence="1">
        <name>Mg(2+)</name>
        <dbReference type="ChEBI" id="CHEBI:18420"/>
    </cofactor>
    <text evidence="1">Mg(2+) is required for catalysis and for stabilizing the dimer.</text>
</comment>
<comment type="pathway">
    <text>Carbohydrate degradation; glycolysis; pyruvate from D-glyceraldehyde 3-phosphate: step 4/5.</text>
</comment>
<comment type="subunit">
    <text evidence="1">Homodimer.</text>
</comment>
<comment type="subcellular location">
    <subcellularLocation>
        <location evidence="1">Cytoplasm</location>
    </subcellularLocation>
</comment>
<comment type="similarity">
    <text evidence="2">Belongs to the enolase family.</text>
</comment>
<keyword id="KW-0963">Cytoplasm</keyword>
<keyword id="KW-0324">Glycolysis</keyword>
<keyword id="KW-0456">Lyase</keyword>
<keyword id="KW-0460">Magnesium</keyword>
<keyword id="KW-0479">Metal-binding</keyword>
<keyword id="KW-1185">Reference proteome</keyword>
<feature type="chain" id="PRO_0000134050" description="Enolase 1">
    <location>
        <begin position="1"/>
        <end position="439"/>
    </location>
</feature>
<feature type="active site" description="Proton donor" evidence="1">
    <location>
        <position position="212"/>
    </location>
</feature>
<feature type="active site" description="Proton acceptor" evidence="1">
    <location>
        <position position="348"/>
    </location>
</feature>
<feature type="binding site" evidence="1">
    <location>
        <position position="160"/>
    </location>
    <ligand>
        <name>substrate</name>
    </ligand>
</feature>
<feature type="binding site" evidence="1">
    <location>
        <position position="169"/>
    </location>
    <ligand>
        <name>substrate</name>
    </ligand>
</feature>
<feature type="binding site" evidence="1">
    <location>
        <position position="247"/>
    </location>
    <ligand>
        <name>Mg(2+)</name>
        <dbReference type="ChEBI" id="CHEBI:18420"/>
    </ligand>
</feature>
<feature type="binding site" evidence="1">
    <location>
        <position position="296"/>
    </location>
    <ligand>
        <name>Mg(2+)</name>
        <dbReference type="ChEBI" id="CHEBI:18420"/>
    </ligand>
</feature>
<feature type="binding site" evidence="1">
    <location>
        <position position="296"/>
    </location>
    <ligand>
        <name>substrate</name>
    </ligand>
</feature>
<feature type="binding site" evidence="1">
    <location>
        <position position="323"/>
    </location>
    <ligand>
        <name>Mg(2+)</name>
        <dbReference type="ChEBI" id="CHEBI:18420"/>
    </ligand>
</feature>
<feature type="binding site" evidence="1">
    <location>
        <position position="323"/>
    </location>
    <ligand>
        <name>substrate</name>
    </ligand>
</feature>
<feature type="binding site" evidence="1">
    <location>
        <begin position="375"/>
        <end position="378"/>
    </location>
    <ligand>
        <name>substrate</name>
    </ligand>
</feature>
<feature type="binding site" evidence="1">
    <location>
        <position position="399"/>
    </location>
    <ligand>
        <name>substrate</name>
    </ligand>
</feature>